<name>VP7_BROAA</name>
<comment type="subcellular location">
    <subcellularLocation>
        <location evidence="1">Secreted</location>
    </subcellularLocation>
</comment>
<comment type="tissue specificity">
    <text evidence="1">Expressed by the venom gland.</text>
</comment>
<keyword id="KW-0903">Direct protein sequencing</keyword>
<keyword id="KW-0964">Secreted</keyword>
<protein>
    <recommendedName>
        <fullName evidence="2">Venom peptide 7</fullName>
    </recommendedName>
    <alternativeName>
        <fullName evidence="2">BaP-7</fullName>
    </alternativeName>
</protein>
<evidence type="ECO:0000269" key="1">
    <source ref="1"/>
</evidence>
<evidence type="ECO:0000303" key="2">
    <source ref="1"/>
</evidence>
<evidence type="ECO:0000305" key="3"/>
<reference evidence="3" key="1">
    <citation type="submission" date="2009-07" db="UniProtKB">
        <title>Brazilian scorpion Brotheas amazonicus venom peptidomics.</title>
        <authorList>
            <person name="Ireno I.C."/>
            <person name="Rates B.A."/>
            <person name="Pimenta A.M.C."/>
        </authorList>
    </citation>
    <scope>PROTEIN SEQUENCE</scope>
    <scope>SUBCELLULAR LOCATION</scope>
    <scope>TISSUE SPECIFICITY</scope>
    <source>
        <tissue evidence="1">Venom</tissue>
    </source>
</reference>
<dbReference type="GO" id="GO:0005576">
    <property type="term" value="C:extracellular region"/>
    <property type="evidence" value="ECO:0007669"/>
    <property type="project" value="UniProtKB-SubCell"/>
</dbReference>
<proteinExistence type="evidence at protein level"/>
<accession>P86338</accession>
<feature type="peptide" id="PRO_0000383660" description="Venom peptide 7" evidence="1">
    <location>
        <begin position="1" status="less than"/>
        <end position="12" status="greater than"/>
    </location>
</feature>
<feature type="non-terminal residue" evidence="2">
    <location>
        <position position="1"/>
    </location>
</feature>
<feature type="non-terminal residue" evidence="2">
    <location>
        <position position="12"/>
    </location>
</feature>
<sequence length="12" mass="1429">VAIRIIWSDIQD</sequence>
<organism>
    <name type="scientific">Brotheas amazonicus</name>
    <name type="common">Scorpion</name>
    <dbReference type="NCBI Taxonomy" id="662117"/>
    <lineage>
        <taxon>Eukaryota</taxon>
        <taxon>Metazoa</taxon>
        <taxon>Ecdysozoa</taxon>
        <taxon>Arthropoda</taxon>
        <taxon>Chelicerata</taxon>
        <taxon>Arachnida</taxon>
        <taxon>Scorpiones</taxon>
        <taxon>Iurida</taxon>
        <taxon>Chactoidea</taxon>
        <taxon>Chactidae</taxon>
        <taxon>Brotheinae</taxon>
        <taxon>Brotheini</taxon>
        <taxon>Brotheina</taxon>
        <taxon>Brotheas</taxon>
    </lineage>
</organism>